<protein>
    <recommendedName>
        <fullName evidence="1">UvrABC system protein C</fullName>
        <shortName evidence="1">Protein UvrC</shortName>
    </recommendedName>
    <alternativeName>
        <fullName evidence="1">Excinuclease ABC subunit C</fullName>
    </alternativeName>
</protein>
<reference key="1">
    <citation type="journal article" date="2010" name="Genome Biol.">
        <title>Structure and dynamics of the pan-genome of Streptococcus pneumoniae and closely related species.</title>
        <authorList>
            <person name="Donati C."/>
            <person name="Hiller N.L."/>
            <person name="Tettelin H."/>
            <person name="Muzzi A."/>
            <person name="Croucher N.J."/>
            <person name="Angiuoli S.V."/>
            <person name="Oggioni M."/>
            <person name="Dunning Hotopp J.C."/>
            <person name="Hu F.Z."/>
            <person name="Riley D.R."/>
            <person name="Covacci A."/>
            <person name="Mitchell T.J."/>
            <person name="Bentley S.D."/>
            <person name="Kilian M."/>
            <person name="Ehrlich G.D."/>
            <person name="Rappuoli R."/>
            <person name="Moxon E.R."/>
            <person name="Masignani V."/>
        </authorList>
    </citation>
    <scope>NUCLEOTIDE SEQUENCE [LARGE SCALE GENOMIC DNA]</scope>
    <source>
        <strain>Taiwan19F-14</strain>
    </source>
</reference>
<gene>
    <name evidence="1" type="primary">uvrC</name>
    <name type="ordered locus">SPT_0643</name>
</gene>
<accession>C1CQA2</accession>
<feature type="chain" id="PRO_1000200606" description="UvrABC system protein C">
    <location>
        <begin position="1"/>
        <end position="614"/>
    </location>
</feature>
<feature type="domain" description="GIY-YIG" evidence="1">
    <location>
        <begin position="14"/>
        <end position="91"/>
    </location>
</feature>
<feature type="domain" description="UVR" evidence="1">
    <location>
        <begin position="196"/>
        <end position="231"/>
    </location>
</feature>
<feature type="region of interest" description="Disordered" evidence="2">
    <location>
        <begin position="595"/>
        <end position="614"/>
    </location>
</feature>
<evidence type="ECO:0000255" key="1">
    <source>
        <dbReference type="HAMAP-Rule" id="MF_00203"/>
    </source>
</evidence>
<evidence type="ECO:0000256" key="2">
    <source>
        <dbReference type="SAM" id="MobiDB-lite"/>
    </source>
</evidence>
<name>UVRC_STRZT</name>
<sequence length="614" mass="70377">MNNLIKSKLELLPTSPGCYIHKDKNGTIIYVGKAKNLRNRVRSYFRGSHDTKTEALVSEIVDFEFIVTESNIEALLLEINLIKENKPKYNIMLKDDKSYPFIKITNERYPRLIITRQVKKDGGLYFGPYPDVGAANEIKRLLDRIFPFRKCTNPPSKVCFYYHIGQCMAHTICKKDEAYFKSMAQEVSDFLKGQDNKIIDELKGKMAAAAQTMEFERAAEYRDLIQAIGTLRTKQRVMAKDLQNRDVFGYYVDKGWMCVQVFFVRQGKLIERDVNLFPYFNDPDEDFLTYVGQFYQEKSHLVPNEVLIPQDIDEEAVKALVDSKILKPQRGEKKQLVNLAIKNARVSLEQKFNLLEKSVEKTQGAIENLGRLLQIPTPVRIESFDNSNIMGTSPVSAMVVFVNGKPSKKDYRKYKIKTVVGPDDYASMREVIRRRYGRVQREALTPPDLIVIDGGQGQVNIAKQVIQEELGLDIPIAGLQKNDKHQTHELLFGDPLEVVDLSRNSQEFFLLQRIQDEVHRFAITFHRQLRSKNSFSSQLDGIDGLGPKRKQNLMKHFKSLTKIKEASVDEIVEVGVPRVVAEAVQRKLNPQGEALPQVAEERVDYQTEGNHNKP</sequence>
<dbReference type="EMBL" id="CP000921">
    <property type="protein sequence ID" value="ACO22561.1"/>
    <property type="molecule type" value="Genomic_DNA"/>
</dbReference>
<dbReference type="RefSeq" id="WP_001061135.1">
    <property type="nucleotide sequence ID" value="NC_012469.1"/>
</dbReference>
<dbReference type="SMR" id="C1CQA2"/>
<dbReference type="KEGG" id="snt:SPT_0643"/>
<dbReference type="HOGENOM" id="CLU_014841_3_2_9"/>
<dbReference type="GO" id="GO:0005737">
    <property type="term" value="C:cytoplasm"/>
    <property type="evidence" value="ECO:0007669"/>
    <property type="project" value="UniProtKB-SubCell"/>
</dbReference>
<dbReference type="GO" id="GO:0009380">
    <property type="term" value="C:excinuclease repair complex"/>
    <property type="evidence" value="ECO:0007669"/>
    <property type="project" value="InterPro"/>
</dbReference>
<dbReference type="GO" id="GO:0003677">
    <property type="term" value="F:DNA binding"/>
    <property type="evidence" value="ECO:0007669"/>
    <property type="project" value="UniProtKB-UniRule"/>
</dbReference>
<dbReference type="GO" id="GO:0009381">
    <property type="term" value="F:excinuclease ABC activity"/>
    <property type="evidence" value="ECO:0007669"/>
    <property type="project" value="UniProtKB-UniRule"/>
</dbReference>
<dbReference type="GO" id="GO:0006289">
    <property type="term" value="P:nucleotide-excision repair"/>
    <property type="evidence" value="ECO:0007669"/>
    <property type="project" value="UniProtKB-UniRule"/>
</dbReference>
<dbReference type="GO" id="GO:0009432">
    <property type="term" value="P:SOS response"/>
    <property type="evidence" value="ECO:0007669"/>
    <property type="project" value="UniProtKB-UniRule"/>
</dbReference>
<dbReference type="CDD" id="cd10434">
    <property type="entry name" value="GIY-YIG_UvrC_Cho"/>
    <property type="match status" value="1"/>
</dbReference>
<dbReference type="FunFam" id="1.10.150.20:FF:000005">
    <property type="entry name" value="UvrABC system protein C"/>
    <property type="match status" value="1"/>
</dbReference>
<dbReference type="FunFam" id="3.30.420.340:FF:000002">
    <property type="entry name" value="UvrABC system protein C"/>
    <property type="match status" value="1"/>
</dbReference>
<dbReference type="FunFam" id="3.40.1440.10:FF:000001">
    <property type="entry name" value="UvrABC system protein C"/>
    <property type="match status" value="1"/>
</dbReference>
<dbReference type="FunFam" id="4.10.860.10:FF:000007">
    <property type="entry name" value="UvrABC system protein C"/>
    <property type="match status" value="1"/>
</dbReference>
<dbReference type="Gene3D" id="1.10.150.20">
    <property type="entry name" value="5' to 3' exonuclease, C-terminal subdomain"/>
    <property type="match status" value="1"/>
</dbReference>
<dbReference type="Gene3D" id="3.40.1440.10">
    <property type="entry name" value="GIY-YIG endonuclease"/>
    <property type="match status" value="1"/>
</dbReference>
<dbReference type="Gene3D" id="4.10.860.10">
    <property type="entry name" value="UVR domain"/>
    <property type="match status" value="1"/>
</dbReference>
<dbReference type="Gene3D" id="3.30.420.340">
    <property type="entry name" value="UvrC, RNAse H endonuclease domain"/>
    <property type="match status" value="1"/>
</dbReference>
<dbReference type="HAMAP" id="MF_00203">
    <property type="entry name" value="UvrC"/>
    <property type="match status" value="1"/>
</dbReference>
<dbReference type="InterPro" id="IPR000305">
    <property type="entry name" value="GIY-YIG_endonuc"/>
</dbReference>
<dbReference type="InterPro" id="IPR035901">
    <property type="entry name" value="GIY-YIG_endonuc_sf"/>
</dbReference>
<dbReference type="InterPro" id="IPR047296">
    <property type="entry name" value="GIY-YIG_UvrC_Cho"/>
</dbReference>
<dbReference type="InterPro" id="IPR010994">
    <property type="entry name" value="RuvA_2-like"/>
</dbReference>
<dbReference type="InterPro" id="IPR001943">
    <property type="entry name" value="UVR_dom"/>
</dbReference>
<dbReference type="InterPro" id="IPR036876">
    <property type="entry name" value="UVR_dom_sf"/>
</dbReference>
<dbReference type="InterPro" id="IPR050066">
    <property type="entry name" value="UvrABC_protein_C"/>
</dbReference>
<dbReference type="InterPro" id="IPR004791">
    <property type="entry name" value="UvrC"/>
</dbReference>
<dbReference type="InterPro" id="IPR001162">
    <property type="entry name" value="UvrC_RNase_H_dom"/>
</dbReference>
<dbReference type="InterPro" id="IPR038476">
    <property type="entry name" value="UvrC_RNase_H_dom_sf"/>
</dbReference>
<dbReference type="NCBIfam" id="TIGR00194">
    <property type="entry name" value="uvrC"/>
    <property type="match status" value="1"/>
</dbReference>
<dbReference type="PANTHER" id="PTHR30562:SF1">
    <property type="entry name" value="UVRABC SYSTEM PROTEIN C"/>
    <property type="match status" value="1"/>
</dbReference>
<dbReference type="PANTHER" id="PTHR30562">
    <property type="entry name" value="UVRC/OXIDOREDUCTASE"/>
    <property type="match status" value="1"/>
</dbReference>
<dbReference type="Pfam" id="PF01541">
    <property type="entry name" value="GIY-YIG"/>
    <property type="match status" value="1"/>
</dbReference>
<dbReference type="Pfam" id="PF02151">
    <property type="entry name" value="UVR"/>
    <property type="match status" value="1"/>
</dbReference>
<dbReference type="Pfam" id="PF22920">
    <property type="entry name" value="UvrC_RNaseH"/>
    <property type="match status" value="1"/>
</dbReference>
<dbReference type="Pfam" id="PF08459">
    <property type="entry name" value="UvrC_RNaseH_dom"/>
    <property type="match status" value="1"/>
</dbReference>
<dbReference type="SMART" id="SM00465">
    <property type="entry name" value="GIYc"/>
    <property type="match status" value="1"/>
</dbReference>
<dbReference type="SUPFAM" id="SSF46600">
    <property type="entry name" value="C-terminal UvrC-binding domain of UvrB"/>
    <property type="match status" value="1"/>
</dbReference>
<dbReference type="SUPFAM" id="SSF82771">
    <property type="entry name" value="GIY-YIG endonuclease"/>
    <property type="match status" value="1"/>
</dbReference>
<dbReference type="SUPFAM" id="SSF47781">
    <property type="entry name" value="RuvA domain 2-like"/>
    <property type="match status" value="1"/>
</dbReference>
<dbReference type="PROSITE" id="PS50164">
    <property type="entry name" value="GIY_YIG"/>
    <property type="match status" value="1"/>
</dbReference>
<dbReference type="PROSITE" id="PS50151">
    <property type="entry name" value="UVR"/>
    <property type="match status" value="1"/>
</dbReference>
<dbReference type="PROSITE" id="PS50165">
    <property type="entry name" value="UVRC"/>
    <property type="match status" value="1"/>
</dbReference>
<comment type="function">
    <text evidence="1">The UvrABC repair system catalyzes the recognition and processing of DNA lesions. UvrC both incises the 5' and 3' sides of the lesion. The N-terminal half is responsible for the 3' incision and the C-terminal half is responsible for the 5' incision.</text>
</comment>
<comment type="subunit">
    <text evidence="1">Interacts with UvrB in an incision complex.</text>
</comment>
<comment type="subcellular location">
    <subcellularLocation>
        <location evidence="1">Cytoplasm</location>
    </subcellularLocation>
</comment>
<comment type="similarity">
    <text evidence="1">Belongs to the UvrC family.</text>
</comment>
<organism>
    <name type="scientific">Streptococcus pneumoniae (strain Taiwan19F-14)</name>
    <dbReference type="NCBI Taxonomy" id="487213"/>
    <lineage>
        <taxon>Bacteria</taxon>
        <taxon>Bacillati</taxon>
        <taxon>Bacillota</taxon>
        <taxon>Bacilli</taxon>
        <taxon>Lactobacillales</taxon>
        <taxon>Streptococcaceae</taxon>
        <taxon>Streptococcus</taxon>
    </lineage>
</organism>
<proteinExistence type="inferred from homology"/>
<keyword id="KW-0963">Cytoplasm</keyword>
<keyword id="KW-0227">DNA damage</keyword>
<keyword id="KW-0228">DNA excision</keyword>
<keyword id="KW-0234">DNA repair</keyword>
<keyword id="KW-0267">Excision nuclease</keyword>
<keyword id="KW-0742">SOS response</keyword>